<accession>P26803</accession>
<proteinExistence type="evidence at protein level"/>
<sequence length="676" mass="73946">MACSTLSKSPKDKIDPRDLLIPLILFLSLKGARSAAPGSSPHQVYNITWEVTNGDRETVWAISGNHPLWTWWPDLTPDLCMLALSGPPHWGLEYRAPYSSPPGPPCCSGSSGNRAGCARDCDEPLTSLTPRCNTAWNRLKLDQVTHKSSGGFYVCPGSHRPRKAKSCGGPDSFYCASWGCETTGRAYWKPSSSWDYITVDNNLTTNQAAQVCKDNKWCNPLAIQFTNAGKQVTSWTIGHYWGLRLYVSGQDPGLTFGIRLKYQNLGPRVPIGPNPVLADQLSFPLPNPLPKPAKSPSASNSTPTLISPSPAPTQPPPAGTGDRLLNLVQGAYQALNLTNPDKTQECWLCLVSAPPYYEGVAVLGTYSNHTSAPANCSAGSQHKLTLSEVTGQGLCIGTVPKTHQALCNTTLKTGKGSYYLVAPAGTMWACNTGLTPCLSATVLNRTTDYCVLVELWPRVTYHPPSYVYSQFEKSYRHKREPVSLTLALLLGGLTMGGIAAGVGTGTTALVATQQFQQLHAAVQDDLKEVEKSITNLEKSLTSLSEVVLQNRRGLDLLFLKEGGLCAALKEECCFYADHTGLVRDSMAKLRERLTQRQKLFESSQGWFEGLFNRSPWFTTLISTIMGPLIILLLILLFGPCILNRLVQFVKDRISVVQALVLTQQYHQLKPLEYEPQ</sequence>
<evidence type="ECO:0000250" key="1"/>
<evidence type="ECO:0000255" key="2"/>
<evidence type="ECO:0000256" key="3">
    <source>
        <dbReference type="SAM" id="MobiDB-lite"/>
    </source>
</evidence>
<comment type="function">
    <text evidence="1">The surface protein (SU) attaches the virus to the host cell by binding to its receptor. This interaction triggers the refolding of the transmembrane protein (TM) and is thought to activate its fusogenic potential by unmasking its fusion peptide. Fusion occurs at the host cell plasma membrane (By similarity).</text>
</comment>
<comment type="function">
    <text evidence="1">The transmembrane protein (TM) acts as a class I viral fusion protein. Under the current model, the protein has at least 3 conformational states: pre-fusion native state, pre-hairpin intermediate state, and post-fusion hairpin state. During viral and target cell membrane fusion, the coiled coil regions (heptad repeats) assume a trimer-of-hairpins structure, positioning the fusion peptide in close proximity to the C-terminal region of the ectodomain. The formation of this structure appears to drive apposition and subsequent fusion of viral and target cell membranes. Membranes fusion leads to delivery of the nucleocapsid into the cytoplasm (By similarity).</text>
</comment>
<comment type="subunit">
    <text evidence="1">The mature envelope protein (Env) consists of a trimer of SU-TM heterodimers attached by a labile interchain disulfide bond.</text>
</comment>
<comment type="subcellular location">
    <molecule>Transmembrane protein</molecule>
    <subcellularLocation>
        <location evidence="1">Virion membrane</location>
        <topology evidence="1">Single-pass type I membrane protein</topology>
    </subcellularLocation>
    <subcellularLocation>
        <location evidence="1">Host cell membrane</location>
        <topology evidence="1">Single-pass type I membrane protein</topology>
    </subcellularLocation>
</comment>
<comment type="subcellular location">
    <molecule>Surface protein</molecule>
    <subcellularLocation>
        <location>Virion membrane</location>
        <topology>Peripheral membrane protein</topology>
    </subcellularLocation>
    <subcellularLocation>
        <location evidence="1">Host cell membrane</location>
        <topology evidence="1">Peripheral membrane protein</topology>
    </subcellularLocation>
    <text evidence="1">The surface protein is not anchored to the viral envelope, but associates with the virion surface through its binding to TM. Both proteins are thought to be concentrated at the site of budding and incorporated into the virions possibly by contacts between the cytoplasmic tail of Env and the N-terminus of Gag (By similarity).</text>
</comment>
<comment type="subcellular location">
    <molecule>R-peptide</molecule>
    <subcellularLocation>
        <location evidence="1">Host cell membrane</location>
        <topology evidence="1">Peripheral membrane protein</topology>
    </subcellularLocation>
    <text evidence="1">The R-peptide is membrane-associated through its palmitate.</text>
</comment>
<comment type="domain">
    <text>The YXXL motif is involved in determining the exact site of viral release at the surface of infected mononuclear cells and promotes endocytosis.</text>
</comment>
<comment type="domain">
    <text evidence="1">The 17 amino acids long immunosuppressive region is present in many retroviral envelope proteins. Synthetic peptides derived from this relatively conserved sequence inhibit immune function in vitro and in vivo (By similarity).</text>
</comment>
<comment type="PTM">
    <text evidence="1">Specific enzymatic cleavages in vivo yield mature proteins. Envelope glycoproteins are synthesized as an inactive precursor that is N-glycosylated and processed likely by host cell furin or by a furin-like protease in the Golgi to yield the mature SU and TM proteins. The cleavage site between SU and TM requires the minimal sequence [KR]-X-[KR]-R. The R-peptide is released from the C-terminus of the cytoplasmic tail of the TM protein upon particle formation as a result of proteolytic cleavage by the viral protease. Cleavage of this peptide is required for TM to become fusogenic (By similarity).</text>
</comment>
<comment type="PTM">
    <text evidence="1">The CXXC motif is highly conserved across a broad range of retroviral envelope proteins. It is thought to participate in the formation of a labile disulfide bond possibly with the CX6CC motif present in the transmembrane protein. Isomerization of the intersubunit disulfide bond to an SU intrachain disulfide bond is thought to occur upon receptor recognition in order to allow membrane fusion (By similarity).</text>
</comment>
<comment type="PTM">
    <text evidence="1">The transmembrane protein is palmitoylated.</text>
</comment>
<comment type="PTM">
    <text evidence="1">The R-peptide is palmitoylated.</text>
</comment>
<comment type="miscellaneous">
    <text>The surface protein appears to be responsible for the neuropathogenicity of PVC-211 MuLV.</text>
</comment>
<feature type="signal peptide" evidence="2">
    <location>
        <begin position="1"/>
        <end position="34"/>
    </location>
</feature>
<feature type="chain" id="PRO_0000239583" description="Envelope glycoprotein">
    <location>
        <begin position="35"/>
        <end position="676"/>
    </location>
</feature>
<feature type="chain" id="PRO_0000040757" description="Surface protein" evidence="1">
    <location>
        <begin position="35"/>
        <end position="479"/>
    </location>
</feature>
<feature type="chain" id="PRO_0000040758" description="Transmembrane protein" evidence="1">
    <location>
        <begin position="480"/>
        <end position="659"/>
    </location>
</feature>
<feature type="peptide" id="PRO_0000040759" description="R-peptide" evidence="1">
    <location>
        <begin position="660"/>
        <end position="676"/>
    </location>
</feature>
<feature type="topological domain" description="Extracellular" evidence="2">
    <location>
        <begin position="35"/>
        <end position="620"/>
    </location>
</feature>
<feature type="transmembrane region" description="Helical" evidence="2">
    <location>
        <begin position="621"/>
        <end position="641"/>
    </location>
</feature>
<feature type="topological domain" description="Cytoplasmic" evidence="2">
    <location>
        <begin position="642"/>
        <end position="676"/>
    </location>
</feature>
<feature type="region of interest" description="Receptor-binding domain (RBD)" evidence="2">
    <location>
        <begin position="35"/>
        <end position="270"/>
    </location>
</feature>
<feature type="region of interest" description="Disordered" evidence="3">
    <location>
        <begin position="287"/>
        <end position="322"/>
    </location>
</feature>
<feature type="region of interest" description="Fusion peptide" evidence="1">
    <location>
        <begin position="482"/>
        <end position="502"/>
    </location>
</feature>
<feature type="region of interest" description="Immunosuppression" evidence="1">
    <location>
        <begin position="548"/>
        <end position="564"/>
    </location>
</feature>
<feature type="coiled-coil region" evidence="2">
    <location>
        <begin position="513"/>
        <end position="547"/>
    </location>
</feature>
<feature type="short sequence motif" description="CXXC">
    <location>
        <begin position="346"/>
        <end position="349"/>
    </location>
</feature>
<feature type="short sequence motif" description="CX6CC">
    <location>
        <begin position="565"/>
        <end position="573"/>
    </location>
</feature>
<feature type="short sequence motif" description="YXXL motif; contains endocytosis signal" evidence="1">
    <location>
        <begin position="665"/>
        <end position="668"/>
    </location>
</feature>
<feature type="compositionally biased region" description="Low complexity" evidence="3">
    <location>
        <begin position="294"/>
        <end position="308"/>
    </location>
</feature>
<feature type="compositionally biased region" description="Pro residues" evidence="3">
    <location>
        <begin position="309"/>
        <end position="318"/>
    </location>
</feature>
<feature type="binding site" evidence="1">
    <location>
        <position position="89"/>
    </location>
    <ligand>
        <name>Zn(2+)</name>
        <dbReference type="ChEBI" id="CHEBI:29105"/>
    </ligand>
</feature>
<feature type="binding site" evidence="1">
    <location>
        <position position="120"/>
    </location>
    <ligand>
        <name>Zn(2+)</name>
        <dbReference type="ChEBI" id="CHEBI:29105"/>
    </ligand>
</feature>
<feature type="site" description="Cleavage; by host" evidence="1">
    <location>
        <begin position="479"/>
        <end position="480"/>
    </location>
</feature>
<feature type="site" description="Cleavage; by viral protease p14" evidence="1">
    <location>
        <begin position="659"/>
        <end position="660"/>
    </location>
</feature>
<feature type="lipid moiety-binding region" description="S-palmitoyl cysteine; by host" evidence="1">
    <location>
        <position position="640"/>
    </location>
</feature>
<feature type="glycosylation site" description="N-linked (GlcNAc...) asparagine; by host" evidence="1">
    <location>
        <position position="46"/>
    </location>
</feature>
<feature type="glycosylation site" description="N-linked (GlcNAc...) asparagine; by host" evidence="1">
    <location>
        <position position="202"/>
    </location>
</feature>
<feature type="glycosylation site" description="N-linked (GlcNAc...) asparagine; by host" evidence="1">
    <location>
        <position position="336"/>
    </location>
</feature>
<feature type="glycosylation site" description="N-linked (GlcNAc...) asparagine; by host" evidence="2">
    <location>
        <position position="368"/>
    </location>
</feature>
<feature type="glycosylation site" description="N-linked (GlcNAc...) asparagine; by host" evidence="2">
    <location>
        <position position="375"/>
    </location>
</feature>
<feature type="glycosylation site" description="N-linked (GlcNAc...) asparagine; by host" evidence="2">
    <location>
        <position position="408"/>
    </location>
</feature>
<feature type="glycosylation site" description="N-linked (GlcNAc...) asparagine; by host" evidence="2">
    <location>
        <position position="444"/>
    </location>
</feature>
<feature type="disulfide bond" evidence="1">
    <location>
        <begin position="80"/>
        <end position="132"/>
    </location>
</feature>
<feature type="disulfide bond" evidence="1">
    <location>
        <begin position="106"/>
        <end position="121"/>
    </location>
</feature>
<feature type="disulfide bond" evidence="1">
    <location>
        <begin position="107"/>
        <end position="117"/>
    </location>
</feature>
<feature type="disulfide bond" evidence="1">
    <location>
        <begin position="155"/>
        <end position="175"/>
    </location>
</feature>
<feature type="disulfide bond" evidence="1">
    <location>
        <begin position="167"/>
        <end position="180"/>
    </location>
</feature>
<feature type="disulfide bond" evidence="1">
    <location>
        <begin position="212"/>
        <end position="218"/>
    </location>
</feature>
<feature type="disulfide bond" description="Interchain (between SU and TM chains, or C-349 with C-573); in linked form">
    <location>
        <begin position="346"/>
        <end position="573"/>
    </location>
</feature>
<feature type="disulfide bond">
    <location>
        <begin position="346"/>
        <end position="349"/>
    </location>
</feature>
<feature type="disulfide bond" evidence="1">
    <location>
        <begin position="376"/>
        <end position="430"/>
    </location>
</feature>
<feature type="disulfide bond" evidence="1">
    <location>
        <begin position="395"/>
        <end position="407"/>
    </location>
</feature>
<feature type="disulfide bond" evidence="1">
    <location>
        <begin position="437"/>
        <end position="450"/>
    </location>
</feature>
<feature type="disulfide bond" evidence="1">
    <location>
        <begin position="565"/>
        <end position="572"/>
    </location>
</feature>
<name>ENV_MLVFP</name>
<protein>
    <recommendedName>
        <fullName>Envelope glycoprotein</fullName>
    </recommendedName>
    <alternativeName>
        <fullName>Env polyprotein</fullName>
    </alternativeName>
    <component>
        <recommendedName>
            <fullName>Surface protein</fullName>
            <shortName>SU</shortName>
        </recommendedName>
        <alternativeName>
            <fullName>Glycoprotein 70</fullName>
            <shortName>gp70</shortName>
        </alternativeName>
    </component>
    <component>
        <recommendedName>
            <fullName>Transmembrane protein</fullName>
            <shortName>TM</shortName>
        </recommendedName>
        <alternativeName>
            <fullName>Envelope protein p15E</fullName>
        </alternativeName>
    </component>
    <component>
        <recommendedName>
            <fullName>R-peptide</fullName>
        </recommendedName>
        <alternativeName>
            <fullName>p2E</fullName>
        </alternativeName>
    </component>
</protein>
<gene>
    <name type="primary">env</name>
</gene>
<keyword id="KW-0165">Cleavage on pair of basic residues</keyword>
<keyword id="KW-0175">Coiled coil</keyword>
<keyword id="KW-1015">Disulfide bond</keyword>
<keyword id="KW-1169">Fusion of virus membrane with host cell membrane</keyword>
<keyword id="KW-1168">Fusion of virus membrane with host membrane</keyword>
<keyword id="KW-0325">Glycoprotein</keyword>
<keyword id="KW-1032">Host cell membrane</keyword>
<keyword id="KW-1043">Host membrane</keyword>
<keyword id="KW-0945">Host-virus interaction</keyword>
<keyword id="KW-0449">Lipoprotein</keyword>
<keyword id="KW-0472">Membrane</keyword>
<keyword id="KW-0479">Metal-binding</keyword>
<keyword id="KW-0564">Palmitate</keyword>
<keyword id="KW-0732">Signal</keyword>
<keyword id="KW-0812">Transmembrane</keyword>
<keyword id="KW-1133">Transmembrane helix</keyword>
<keyword id="KW-1161">Viral attachment to host cell</keyword>
<keyword id="KW-0261">Viral envelope protein</keyword>
<keyword id="KW-1162">Viral penetration into host cytoplasm</keyword>
<keyword id="KW-0946">Virion</keyword>
<keyword id="KW-1160">Virus entry into host cell</keyword>
<keyword id="KW-0862">Zinc</keyword>
<organismHost>
    <name type="scientific">Mus musculus</name>
    <name type="common">Mouse</name>
    <dbReference type="NCBI Taxonomy" id="10090"/>
</organismHost>
<organism>
    <name type="scientific">Friend murine leukemia virus (isolate PVC-211)</name>
    <name type="common">FrMLV</name>
    <dbReference type="NCBI Taxonomy" id="11798"/>
    <lineage>
        <taxon>Viruses</taxon>
        <taxon>Riboviria</taxon>
        <taxon>Pararnavirae</taxon>
        <taxon>Artverviricota</taxon>
        <taxon>Revtraviricetes</taxon>
        <taxon>Ortervirales</taxon>
        <taxon>Retroviridae</taxon>
        <taxon>Orthoretrovirinae</taxon>
        <taxon>Gammaretrovirus</taxon>
        <taxon>Murine leukemia virus</taxon>
    </lineage>
</organism>
<reference key="1">
    <citation type="journal article" date="1992" name="J. Virol.">
        <title>Molecular characterization of a neuropathogenic and nonerythroleukemogenic variant of Friend murine leukemia virus PVC-211.</title>
        <authorList>
            <person name="Masuda M."/>
            <person name="Remington M.P."/>
            <person name="Hoffman P.M."/>
            <person name="Ruscetti S.K."/>
        </authorList>
    </citation>
    <scope>NUCLEOTIDE SEQUENCE [GENOMIC RNA]</scope>
</reference>
<reference key="2">
    <citation type="journal article" date="1992" name="Nucleic Acids Res.">
        <title>Complete nucleotide sequence of a neuropathogenic variant of Friend murine leukemia virus PVC-211.</title>
        <authorList>
            <person name="Remington M.P."/>
            <person name="Hoffman P.M."/>
            <person name="Ruscetti S.K."/>
            <person name="Masuda M."/>
        </authorList>
    </citation>
    <scope>NUCLEOTIDE SEQUENCE [GENOMIC RNA]</scope>
</reference>
<dbReference type="EMBL" id="M93134">
    <property type="protein sequence ID" value="AAA46478.1"/>
    <property type="molecule type" value="Genomic_RNA"/>
</dbReference>
<dbReference type="PIR" id="A38210">
    <property type="entry name" value="VCMVPV"/>
</dbReference>
<dbReference type="SMR" id="P26803"/>
<dbReference type="GlyCosmos" id="P26803">
    <property type="glycosylation" value="7 sites, No reported glycans"/>
</dbReference>
<dbReference type="Proteomes" id="UP000007777">
    <property type="component" value="Genome"/>
</dbReference>
<dbReference type="GO" id="GO:0020002">
    <property type="term" value="C:host cell plasma membrane"/>
    <property type="evidence" value="ECO:0007669"/>
    <property type="project" value="UniProtKB-SubCell"/>
</dbReference>
<dbReference type="GO" id="GO:0016020">
    <property type="term" value="C:membrane"/>
    <property type="evidence" value="ECO:0007669"/>
    <property type="project" value="UniProtKB-KW"/>
</dbReference>
<dbReference type="GO" id="GO:0019031">
    <property type="term" value="C:viral envelope"/>
    <property type="evidence" value="ECO:0007669"/>
    <property type="project" value="UniProtKB-KW"/>
</dbReference>
<dbReference type="GO" id="GO:0055036">
    <property type="term" value="C:virion membrane"/>
    <property type="evidence" value="ECO:0007669"/>
    <property type="project" value="UniProtKB-SubCell"/>
</dbReference>
<dbReference type="GO" id="GO:0046872">
    <property type="term" value="F:metal ion binding"/>
    <property type="evidence" value="ECO:0007669"/>
    <property type="project" value="UniProtKB-KW"/>
</dbReference>
<dbReference type="GO" id="GO:0019064">
    <property type="term" value="P:fusion of virus membrane with host plasma membrane"/>
    <property type="evidence" value="ECO:0007669"/>
    <property type="project" value="UniProtKB-KW"/>
</dbReference>
<dbReference type="GO" id="GO:0046718">
    <property type="term" value="P:symbiont entry into host cell"/>
    <property type="evidence" value="ECO:0007669"/>
    <property type="project" value="UniProtKB-KW"/>
</dbReference>
<dbReference type="GO" id="GO:0019062">
    <property type="term" value="P:virion attachment to host cell"/>
    <property type="evidence" value="ECO:0007669"/>
    <property type="project" value="UniProtKB-KW"/>
</dbReference>
<dbReference type="CDD" id="cd09851">
    <property type="entry name" value="HTLV-1-like_HR1-HR2"/>
    <property type="match status" value="1"/>
</dbReference>
<dbReference type="FunFam" id="1.10.287.210:FF:000005">
    <property type="entry name" value="Envelope glycoprotein"/>
    <property type="match status" value="1"/>
</dbReference>
<dbReference type="Gene3D" id="1.10.287.210">
    <property type="match status" value="1"/>
</dbReference>
<dbReference type="Gene3D" id="3.90.310.10">
    <property type="entry name" value="ENV polyprotein, receptor-binding domain"/>
    <property type="match status" value="1"/>
</dbReference>
<dbReference type="InterPro" id="IPR008981">
    <property type="entry name" value="FMuLV_rcpt-bd"/>
</dbReference>
<dbReference type="InterPro" id="IPR018154">
    <property type="entry name" value="TLV/ENV_coat_polyprotein"/>
</dbReference>
<dbReference type="PANTHER" id="PTHR10424:SF72">
    <property type="entry name" value="BC035947 PROTEIN-RELATED"/>
    <property type="match status" value="1"/>
</dbReference>
<dbReference type="PANTHER" id="PTHR10424">
    <property type="entry name" value="VIRAL ENVELOPE PROTEIN"/>
    <property type="match status" value="1"/>
</dbReference>
<dbReference type="Pfam" id="PF00429">
    <property type="entry name" value="TLV_coat"/>
    <property type="match status" value="1"/>
</dbReference>
<dbReference type="SUPFAM" id="SSF49830">
    <property type="entry name" value="ENV polyprotein, receptor-binding domain"/>
    <property type="match status" value="1"/>
</dbReference>
<dbReference type="SUPFAM" id="SSF58069">
    <property type="entry name" value="Virus ectodomain"/>
    <property type="match status" value="1"/>
</dbReference>